<evidence type="ECO:0000255" key="1">
    <source>
        <dbReference type="HAMAP-Rule" id="MF_01331"/>
    </source>
</evidence>
<evidence type="ECO:0000305" key="2"/>
<comment type="function">
    <text evidence="1">This protein binds specifically to 23S rRNA; its binding is stimulated by other ribosomal proteins, e.g. L4, L17, and L20. It is important during the early stages of 50S assembly. It makes multiple contacts with different domains of the 23S rRNA in the assembled 50S subunit and ribosome (By similarity).</text>
</comment>
<comment type="function">
    <text evidence="1">The globular domain of the protein is located near the polypeptide exit tunnel on the outside of the subunit, while an extended beta-hairpin is found that lines the wall of the exit tunnel in the center of the 70S ribosome.</text>
</comment>
<comment type="subunit">
    <text evidence="1">Part of the 50S ribosomal subunit.</text>
</comment>
<comment type="similarity">
    <text evidence="1">Belongs to the universal ribosomal protein uL22 family.</text>
</comment>
<proteinExistence type="inferred from homology"/>
<feature type="chain" id="PRO_1000052549" description="Large ribosomal subunit protein uL22">
    <location>
        <begin position="1"/>
        <end position="109"/>
    </location>
</feature>
<organism>
    <name type="scientific">Burkholderia pseudomallei (strain 1106a)</name>
    <dbReference type="NCBI Taxonomy" id="357348"/>
    <lineage>
        <taxon>Bacteria</taxon>
        <taxon>Pseudomonadati</taxon>
        <taxon>Pseudomonadota</taxon>
        <taxon>Betaproteobacteria</taxon>
        <taxon>Burkholderiales</taxon>
        <taxon>Burkholderiaceae</taxon>
        <taxon>Burkholderia</taxon>
        <taxon>pseudomallei group</taxon>
    </lineage>
</organism>
<protein>
    <recommendedName>
        <fullName evidence="1">Large ribosomal subunit protein uL22</fullName>
    </recommendedName>
    <alternativeName>
        <fullName evidence="2">50S ribosomal protein L22</fullName>
    </alternativeName>
</protein>
<accession>A3P0A8</accession>
<keyword id="KW-0687">Ribonucleoprotein</keyword>
<keyword id="KW-0689">Ribosomal protein</keyword>
<keyword id="KW-0694">RNA-binding</keyword>
<keyword id="KW-0699">rRNA-binding</keyword>
<dbReference type="EMBL" id="CP000572">
    <property type="protein sequence ID" value="ABN90844.1"/>
    <property type="molecule type" value="Genomic_DNA"/>
</dbReference>
<dbReference type="RefSeq" id="WP_004199272.1">
    <property type="nucleotide sequence ID" value="NC_009076.1"/>
</dbReference>
<dbReference type="SMR" id="A3P0A8"/>
<dbReference type="GeneID" id="98107155"/>
<dbReference type="KEGG" id="bpl:BURPS1106A_3799"/>
<dbReference type="HOGENOM" id="CLU_083987_3_3_4"/>
<dbReference type="Proteomes" id="UP000006738">
    <property type="component" value="Chromosome I"/>
</dbReference>
<dbReference type="GO" id="GO:0022625">
    <property type="term" value="C:cytosolic large ribosomal subunit"/>
    <property type="evidence" value="ECO:0007669"/>
    <property type="project" value="TreeGrafter"/>
</dbReference>
<dbReference type="GO" id="GO:0019843">
    <property type="term" value="F:rRNA binding"/>
    <property type="evidence" value="ECO:0007669"/>
    <property type="project" value="UniProtKB-UniRule"/>
</dbReference>
<dbReference type="GO" id="GO:0003735">
    <property type="term" value="F:structural constituent of ribosome"/>
    <property type="evidence" value="ECO:0007669"/>
    <property type="project" value="InterPro"/>
</dbReference>
<dbReference type="GO" id="GO:0006412">
    <property type="term" value="P:translation"/>
    <property type="evidence" value="ECO:0007669"/>
    <property type="project" value="UniProtKB-UniRule"/>
</dbReference>
<dbReference type="CDD" id="cd00336">
    <property type="entry name" value="Ribosomal_L22"/>
    <property type="match status" value="1"/>
</dbReference>
<dbReference type="FunFam" id="3.90.470.10:FF:000001">
    <property type="entry name" value="50S ribosomal protein L22"/>
    <property type="match status" value="1"/>
</dbReference>
<dbReference type="Gene3D" id="3.90.470.10">
    <property type="entry name" value="Ribosomal protein L22/L17"/>
    <property type="match status" value="1"/>
</dbReference>
<dbReference type="HAMAP" id="MF_01331_B">
    <property type="entry name" value="Ribosomal_uL22_B"/>
    <property type="match status" value="1"/>
</dbReference>
<dbReference type="InterPro" id="IPR001063">
    <property type="entry name" value="Ribosomal_uL22"/>
</dbReference>
<dbReference type="InterPro" id="IPR005727">
    <property type="entry name" value="Ribosomal_uL22_bac/chlpt-type"/>
</dbReference>
<dbReference type="InterPro" id="IPR047867">
    <property type="entry name" value="Ribosomal_uL22_bac/org-type"/>
</dbReference>
<dbReference type="InterPro" id="IPR018260">
    <property type="entry name" value="Ribosomal_uL22_CS"/>
</dbReference>
<dbReference type="InterPro" id="IPR036394">
    <property type="entry name" value="Ribosomal_uL22_sf"/>
</dbReference>
<dbReference type="NCBIfam" id="TIGR01044">
    <property type="entry name" value="rplV_bact"/>
    <property type="match status" value="1"/>
</dbReference>
<dbReference type="PANTHER" id="PTHR13501">
    <property type="entry name" value="CHLOROPLAST 50S RIBOSOMAL PROTEIN L22-RELATED"/>
    <property type="match status" value="1"/>
</dbReference>
<dbReference type="PANTHER" id="PTHR13501:SF8">
    <property type="entry name" value="LARGE RIBOSOMAL SUBUNIT PROTEIN UL22M"/>
    <property type="match status" value="1"/>
</dbReference>
<dbReference type="Pfam" id="PF00237">
    <property type="entry name" value="Ribosomal_L22"/>
    <property type="match status" value="1"/>
</dbReference>
<dbReference type="SUPFAM" id="SSF54843">
    <property type="entry name" value="Ribosomal protein L22"/>
    <property type="match status" value="1"/>
</dbReference>
<dbReference type="PROSITE" id="PS00464">
    <property type="entry name" value="RIBOSOMAL_L22"/>
    <property type="match status" value="1"/>
</dbReference>
<sequence length="109" mass="11816">MEVKAIHRGARISAQKTRLVADQIRGLPVDKALNVLTFSPKKAAGIVKKVVLSAIANAEHNEGADIDELKIKSIYVDKAASLKRFTARAKGRGNRIEKQSCHITVTVGN</sequence>
<reference key="1">
    <citation type="journal article" date="2010" name="Genome Biol. Evol.">
        <title>Continuing evolution of Burkholderia mallei through genome reduction and large-scale rearrangements.</title>
        <authorList>
            <person name="Losada L."/>
            <person name="Ronning C.M."/>
            <person name="DeShazer D."/>
            <person name="Woods D."/>
            <person name="Fedorova N."/>
            <person name="Kim H.S."/>
            <person name="Shabalina S.A."/>
            <person name="Pearson T.R."/>
            <person name="Brinkac L."/>
            <person name="Tan P."/>
            <person name="Nandi T."/>
            <person name="Crabtree J."/>
            <person name="Badger J."/>
            <person name="Beckstrom-Sternberg S."/>
            <person name="Saqib M."/>
            <person name="Schutzer S.E."/>
            <person name="Keim P."/>
            <person name="Nierman W.C."/>
        </authorList>
    </citation>
    <scope>NUCLEOTIDE SEQUENCE [LARGE SCALE GENOMIC DNA]</scope>
    <source>
        <strain>1106a</strain>
    </source>
</reference>
<gene>
    <name evidence="1" type="primary">rplV</name>
    <name type="ordered locus">BURPS1106A_3799</name>
</gene>
<name>RL22_BURP0</name>